<gene>
    <name evidence="22" type="primary">REF6</name>
    <name evidence="25" type="synonym">EIN6</name>
    <name evidence="23" type="synonym">JMJ12</name>
    <name evidence="24" type="synonym">PKDM9A</name>
    <name evidence="28" type="ordered locus">At3g48430</name>
    <name evidence="29" type="ORF">T29H11_50</name>
</gene>
<protein>
    <recommendedName>
        <fullName evidence="22">Lysine-specific demethylase REF6</fullName>
        <ecNumber evidence="21">1.14.11.-</ecNumber>
    </recommendedName>
    <alternativeName>
        <fullName evidence="23">Jumonji domain-containing protein 12</fullName>
        <shortName evidence="23">AtJMJ12</shortName>
        <shortName evidence="23">Protein JUMONJI 12</shortName>
    </alternativeName>
    <alternativeName>
        <fullName evidence="22">Lysine-specific histone demethylase REF6</fullName>
    </alternativeName>
    <alternativeName>
        <fullName evidence="25">Protein ENHANCER OF ETHYLENE INSENSITIVITY 6</fullName>
    </alternativeName>
    <alternativeName>
        <fullName evidence="25">Protein ETHYLENE-INSENSITIVE 6</fullName>
    </alternativeName>
    <alternativeName>
        <fullName evidence="22">Protein RELATIVE OF EARLY FLOWERING 6</fullName>
    </alternativeName>
    <alternativeName>
        <fullName evidence="26">[histone H3]-trimethyl-L-lysine(27) monodemethylase JMJ12</fullName>
    </alternativeName>
    <alternativeName>
        <fullName evidence="26">[histone H3]-trimethyl-L-lysine(36) monodemethylase JMJ12</fullName>
    </alternativeName>
    <alternativeName>
        <fullName evidence="26">[histone H3]-trimethyl-L-lysine(4) monodemethylase JMJ12</fullName>
    </alternativeName>
</protein>
<accession>Q9STM3</accession>
<name>REF6_ARATH</name>
<proteinExistence type="evidence at protein level"/>
<sequence>MAVSEQSQDVFPWLKSLPVAPEFRPTLAEFQDPIAYILKIEEEASRYGICKILPPLPPPSKKTSISNLNRSLAARAAARVRDGGFGACDYDGGPTFATRQQQIGFCPRKQRPVQRPVWQSGEEYSFGEFEFKAKNFEKNYLKKCGKKSQLSALEIETLYWRATVDKPFSVEYANDMPGSAFIPLSLAAARRRESGGEGGTVGETAWNMRAMSRAEGSLLKFMKEEIPGVTSPMVYVAMMFSWFAWHVEDHDLHSLNYLHMGAGKTWYGVPKDAALAFEEVVRVHGYGEELNPLVTFSTLGEKTTVMSPEVFVKAGIPCCRLVQNPGEFVVTFPGAYHSGFSHGFNFGEASNIATPEWLRMAKDAAIRRAAINYPPMVSHLQLLYDFVLALGSRVPTSINPKPRSSRLKDKARSEGERLTKKLFVQNIIHNNELLSSLGKGSPVALLPQSSSDISVCSDLRIGSHLITNQENPIQLKCEDLSSDSVVVDLSNGLKDTVSVKEKFTSLCERSRNHLASTEKDTQETLSDAERRKNDAAVALSDQRLFSCVTCGVLSFDCVAIVQPKEAAARYLMSADCSFFNDWTAASGSANLGQAARSLHPQSKEKHDVNYFYNVPVQTMDHSVKTGDQKTSTTSPTIAHKDNDVLGMLASAYGDSSDSEEEDQKGLVTPSSKGETKTYDQEGSDGHEEARDGRTSDFNCQRLTSEQNGLSKGGKSSLLEIALPFIPRSDDDSCRLHVFCLEHAAEVEQQLRPFGGINLMLLCHPEYPRIEAEAKIVAEELVINHEWNDTEFRNVTREDEETIQAALDNVEAKGGNSDWTVKLGVNLSYSAILSRSPLYSKQMPYNSIIYKAFGRSSPVASSPSKPKVSGKRSSRQRKYVVGKWCGKVWMSHQVHPFLLEQDLEGEESERSCHLRVAMDEDATGKRSFPNNVSRDSTTMFGRKYCRKRKIRAKAVPRKKLTSFKREDGVSDDTSEDHSYKQQWRASGNEEESYFETGNTASGDSSNQMSDPHKGIIRHKGYKEFESDDEVSDRSLGEEYTVRACAASESSMENGSQHSMYDHDDDDDDIDRQPRGIPRSQQTRVFRNPVSYESEDNGVYQQSGRISISNRQANRMVGEYDSAENSLEERGFCSTGKRQTRSTAKRIAKTKTVQSSRDTKGRFLQEFASGKKNEELDSYMEGPSTRLRVRHQKPSRGSLETKPKKIGKKRSGNASFSRVATEKDVEEKEEEEEEEENEEEECAAYQCNMEGCTMSFSSEKQLMLHKRNICPIKGCGKNFFSHKYLVQHQRVHSDDRPLKCPWKGCKMTFKWAWSRTEHIRVHTGARPYVCAEPDCGQTFRFVSDFSRHKRKTGHSVKKTNKR</sequence>
<reference key="1">
    <citation type="journal article" date="2004" name="Plant Cell">
        <title>Divergent roles of a pair of homologous jumonji/zinc-finger-class transcription factor proteins in the regulation of Arabidopsis flowering time.</title>
        <authorList>
            <person name="Noh B."/>
            <person name="Lee S.-H."/>
            <person name="Kim H.-J."/>
            <person name="Yi G."/>
            <person name="Shin E.-A."/>
            <person name="Lee M."/>
            <person name="Jung K.-J."/>
            <person name="Doyle M.R."/>
            <person name="Amasino R.M."/>
            <person name="Noh Y.-S."/>
        </authorList>
    </citation>
    <scope>NUCLEOTIDE SEQUENCE [MRNA]</scope>
    <scope>FUNCTION</scope>
    <scope>DISRUPTION PHENOTYPE</scope>
    <scope>TISSUE SPECIFICITY</scope>
    <scope>SUBCELLULAR LOCATION</scope>
</reference>
<reference key="2">
    <citation type="journal article" date="2000" name="Nature">
        <title>Sequence and analysis of chromosome 3 of the plant Arabidopsis thaliana.</title>
        <authorList>
            <person name="Salanoubat M."/>
            <person name="Lemcke K."/>
            <person name="Rieger M."/>
            <person name="Ansorge W."/>
            <person name="Unseld M."/>
            <person name="Fartmann B."/>
            <person name="Valle G."/>
            <person name="Bloecker H."/>
            <person name="Perez-Alonso M."/>
            <person name="Obermaier B."/>
            <person name="Delseny M."/>
            <person name="Boutry M."/>
            <person name="Grivell L.A."/>
            <person name="Mache R."/>
            <person name="Puigdomenech P."/>
            <person name="De Simone V."/>
            <person name="Choisne N."/>
            <person name="Artiguenave F."/>
            <person name="Robert C."/>
            <person name="Brottier P."/>
            <person name="Wincker P."/>
            <person name="Cattolico L."/>
            <person name="Weissenbach J."/>
            <person name="Saurin W."/>
            <person name="Quetier F."/>
            <person name="Schaefer M."/>
            <person name="Mueller-Auer S."/>
            <person name="Gabel C."/>
            <person name="Fuchs M."/>
            <person name="Benes V."/>
            <person name="Wurmbach E."/>
            <person name="Drzonek H."/>
            <person name="Erfle H."/>
            <person name="Jordan N."/>
            <person name="Bangert S."/>
            <person name="Wiedelmann R."/>
            <person name="Kranz H."/>
            <person name="Voss H."/>
            <person name="Holland R."/>
            <person name="Brandt P."/>
            <person name="Nyakatura G."/>
            <person name="Vezzi A."/>
            <person name="D'Angelo M."/>
            <person name="Pallavicini A."/>
            <person name="Toppo S."/>
            <person name="Simionati B."/>
            <person name="Conrad A."/>
            <person name="Hornischer K."/>
            <person name="Kauer G."/>
            <person name="Loehnert T.-H."/>
            <person name="Nordsiek G."/>
            <person name="Reichelt J."/>
            <person name="Scharfe M."/>
            <person name="Schoen O."/>
            <person name="Bargues M."/>
            <person name="Terol J."/>
            <person name="Climent J."/>
            <person name="Navarro P."/>
            <person name="Collado C."/>
            <person name="Perez-Perez A."/>
            <person name="Ottenwaelder B."/>
            <person name="Duchemin D."/>
            <person name="Cooke R."/>
            <person name="Laudie M."/>
            <person name="Berger-Llauro C."/>
            <person name="Purnelle B."/>
            <person name="Masuy D."/>
            <person name="de Haan M."/>
            <person name="Maarse A.C."/>
            <person name="Alcaraz J.-P."/>
            <person name="Cottet A."/>
            <person name="Casacuberta E."/>
            <person name="Monfort A."/>
            <person name="Argiriou A."/>
            <person name="Flores M."/>
            <person name="Liguori R."/>
            <person name="Vitale D."/>
            <person name="Mannhaupt G."/>
            <person name="Haase D."/>
            <person name="Schoof H."/>
            <person name="Rudd S."/>
            <person name="Zaccaria P."/>
            <person name="Mewes H.-W."/>
            <person name="Mayer K.F.X."/>
            <person name="Kaul S."/>
            <person name="Town C.D."/>
            <person name="Koo H.L."/>
            <person name="Tallon L.J."/>
            <person name="Jenkins J."/>
            <person name="Rooney T."/>
            <person name="Rizzo M."/>
            <person name="Walts A."/>
            <person name="Utterback T."/>
            <person name="Fujii C.Y."/>
            <person name="Shea T.P."/>
            <person name="Creasy T.H."/>
            <person name="Haas B."/>
            <person name="Maiti R."/>
            <person name="Wu D."/>
            <person name="Peterson J."/>
            <person name="Van Aken S."/>
            <person name="Pai G."/>
            <person name="Militscher J."/>
            <person name="Sellers P."/>
            <person name="Gill J.E."/>
            <person name="Feldblyum T.V."/>
            <person name="Preuss D."/>
            <person name="Lin X."/>
            <person name="Nierman W.C."/>
            <person name="Salzberg S.L."/>
            <person name="White O."/>
            <person name="Venter J.C."/>
            <person name="Fraser C.M."/>
            <person name="Kaneko T."/>
            <person name="Nakamura Y."/>
            <person name="Sato S."/>
            <person name="Kato T."/>
            <person name="Asamizu E."/>
            <person name="Sasamoto S."/>
            <person name="Kimura T."/>
            <person name="Idesawa K."/>
            <person name="Kawashima K."/>
            <person name="Kishida Y."/>
            <person name="Kiyokawa C."/>
            <person name="Kohara M."/>
            <person name="Matsumoto M."/>
            <person name="Matsuno A."/>
            <person name="Muraki A."/>
            <person name="Nakayama S."/>
            <person name="Nakazaki N."/>
            <person name="Shinpo S."/>
            <person name="Takeuchi C."/>
            <person name="Wada T."/>
            <person name="Watanabe A."/>
            <person name="Yamada M."/>
            <person name="Yasuda M."/>
            <person name="Tabata S."/>
        </authorList>
    </citation>
    <scope>NUCLEOTIDE SEQUENCE [LARGE SCALE GENOMIC DNA]</scope>
    <source>
        <strain>cv. Columbia</strain>
    </source>
</reference>
<reference key="3">
    <citation type="journal article" date="2017" name="Plant J.">
        <title>Araport11: a complete reannotation of the Arabidopsis thaliana reference genome.</title>
        <authorList>
            <person name="Cheng C.Y."/>
            <person name="Krishnakumar V."/>
            <person name="Chan A.P."/>
            <person name="Thibaud-Nissen F."/>
            <person name="Schobel S."/>
            <person name="Town C.D."/>
        </authorList>
    </citation>
    <scope>GENOME REANNOTATION</scope>
    <source>
        <strain>cv. Columbia</strain>
    </source>
</reference>
<reference key="4">
    <citation type="journal article" date="2008" name="BMC Evol. Biol.">
        <title>Evolutionary history of histone demethylase families: distinct evolutionary patterns suggest functional divergence.</title>
        <authorList>
            <person name="Zhou X."/>
            <person name="Ma H."/>
        </authorList>
    </citation>
    <scope>GENE FAMILY</scope>
    <scope>NOMENCLATURE</scope>
</reference>
<reference key="5">
    <citation type="journal article" date="2008" name="J. Integr. Plant Biol.">
        <title>Comparative analysis of JmjC domain-containing proteins reveals the potential histone demethylases in Arabidopsis and rice.</title>
        <authorList>
            <person name="Lu F."/>
            <person name="Li G."/>
            <person name="Cui X."/>
            <person name="Liu C."/>
            <person name="Wang X.-J."/>
            <person name="Cao X."/>
        </authorList>
    </citation>
    <scope>GENE FAMILY</scope>
    <scope>NOMENCLATURE</scope>
    <scope>TISSUE SPECIFICITY</scope>
</reference>
<reference key="6">
    <citation type="journal article" date="2008" name="Proc. Natl. Acad. Sci. U.S.A.">
        <title>Modulation of brassinosteroid-regulated gene expression by Jumonji domain-containing proteins ELF6 and REF6 in Arabidopsis.</title>
        <authorList>
            <person name="Yu X."/>
            <person name="Li L."/>
            <person name="Li L."/>
            <person name="Guo M."/>
            <person name="Chory J."/>
            <person name="Yin Y."/>
        </authorList>
    </citation>
    <scope>FUNCTION</scope>
    <scope>INTERACTION WITH BZR2</scope>
    <scope>DISRUPTION PHENOTYPE</scope>
</reference>
<reference key="7">
    <citation type="journal article" date="2009" name="Plant Physiol.">
        <title>Large-scale Arabidopsis phosphoproteome profiling reveals novel chloroplast kinase substrates and phosphorylation networks.</title>
        <authorList>
            <person name="Reiland S."/>
            <person name="Messerli G."/>
            <person name="Baerenfaller K."/>
            <person name="Gerrits B."/>
            <person name="Endler A."/>
            <person name="Grossmann J."/>
            <person name="Gruissem W."/>
            <person name="Baginsky S."/>
        </authorList>
    </citation>
    <scope>IDENTIFICATION BY MASS SPECTROMETRY [LARGE SCALE ANALYSIS]</scope>
</reference>
<reference key="8">
    <citation type="journal article" date="2010" name="EMBO J.">
        <title>Growth habit determination by the balance of histone methylation activities in Arabidopsis.</title>
        <authorList>
            <person name="Ko J.H."/>
            <person name="Mitina I."/>
            <person name="Tamada Y."/>
            <person name="Hyun Y."/>
            <person name="Choi Y."/>
            <person name="Amasino R.M."/>
            <person name="Noh B."/>
            <person name="Noh Y.S."/>
        </authorList>
    </citation>
    <scope>FUNCTION</scope>
</reference>
<reference key="9">
    <citation type="journal article" date="2011" name="Nat. Genet.">
        <title>Arabidopsis REF6 is a histone H3 lysine 27 demethylase.</title>
        <authorList>
            <person name="Lu F."/>
            <person name="Cui X."/>
            <person name="Zhang S."/>
            <person name="Jenuwein T."/>
            <person name="Cao X."/>
        </authorList>
    </citation>
    <scope>FUNCTION</scope>
    <scope>MUTAGENESIS OF HIS-246</scope>
</reference>
<reference key="10">
    <citation type="journal article" date="2012" name="Mol. Cell. Proteomics">
        <title>Comparative large-scale characterisation of plant vs. mammal proteins reveals similar and idiosyncratic N-alpha acetylation features.</title>
        <authorList>
            <person name="Bienvenut W.V."/>
            <person name="Sumpton D."/>
            <person name="Martinez A."/>
            <person name="Lilla S."/>
            <person name="Espagne C."/>
            <person name="Meinnel T."/>
            <person name="Giglione C."/>
        </authorList>
    </citation>
    <scope>ACETYLATION [LARGE SCALE ANALYSIS] AT ALA-2</scope>
    <scope>CLEAVAGE OF INITIATOR METHIONINE [LARGE SCALE ANALYSIS]</scope>
    <scope>IDENTIFICATION BY MASS SPECTROMETRY [LARGE SCALE ANALYSIS]</scope>
</reference>
<reference key="11">
    <citation type="journal article" date="2014" name="Nat. Commun.">
        <title>Nuclear factor Y-mediated H3K27me3 demethylation of the SOC1 locus orchestrates flowering responses of Arabidopsis.</title>
        <authorList>
            <person name="Hou X."/>
            <person name="Zhou J."/>
            <person name="Liu C."/>
            <person name="Liu L."/>
            <person name="Shen L."/>
            <person name="Yu H."/>
        </authorList>
    </citation>
    <scope>FUNCTION</scope>
    <scope>INTERACTION WITH NFYC9</scope>
</reference>
<reference key="12">
    <citation type="journal article" date="2016" name="Nat. Genet.">
        <title>Concerted genomic targeting of H3K27 demethylase REF6 and chromatin-remodeling ATPase BRM in Arabidopsis.</title>
        <authorList>
            <person name="Li C."/>
            <person name="Gu L."/>
            <person name="Gao L."/>
            <person name="Chen C."/>
            <person name="Wei C.Q."/>
            <person name="Qiu Q."/>
            <person name="Chien C.W."/>
            <person name="Wang S."/>
            <person name="Jiang L."/>
            <person name="Ai L.F."/>
            <person name="Chen C.Y."/>
            <person name="Yang S."/>
            <person name="Nguyen V."/>
            <person name="Qi Y."/>
            <person name="Snyder M.P."/>
            <person name="Burlingame A.L."/>
            <person name="Kohalmi S.E."/>
            <person name="Huang S."/>
            <person name="Cao X."/>
            <person name="Wang Z.Y."/>
            <person name="Wu K."/>
            <person name="Chen X."/>
            <person name="Cui Y."/>
        </authorList>
    </citation>
    <scope>FUNCTION</scope>
    <scope>SUBCELLULAR LOCATION</scope>
    <scope>INTERACTION WITH BRM</scope>
</reference>
<reference key="13">
    <citation type="journal article" date="2016" name="Nat. Genet.">
        <title>REF6 recognizes a specific DNA sequence to demethylate H3K27me3 and regulate organ boundary formation in Arabidopsis.</title>
        <authorList>
            <person name="Cui X."/>
            <person name="Lu F."/>
            <person name="Qiu Q."/>
            <person name="Zhou B."/>
            <person name="Gu L."/>
            <person name="Zhang S."/>
            <person name="Kang Y."/>
            <person name="Cui X."/>
            <person name="Ma X."/>
            <person name="Yao Q."/>
            <person name="Ma J."/>
            <person name="Zhang X."/>
            <person name="Cao X."/>
        </authorList>
    </citation>
    <scope>FUNCTION</scope>
    <scope>DOMAIN</scope>
</reference>
<reference key="14">
    <citation type="journal article" date="2019" name="Cell Res.">
        <title>An H3K27me3 demethylase-HSFA2 regulatory loop orchestrates transgenerational thermomemory in Arabidopsis.</title>
        <authorList>
            <person name="Liu J."/>
            <person name="Feng L."/>
            <person name="Gu X."/>
            <person name="Deng X."/>
            <person name="Qiu Q."/>
            <person name="Li Q."/>
            <person name="Zhang Y."/>
            <person name="Wang M."/>
            <person name="Deng Y."/>
            <person name="Wang E."/>
            <person name="He Y."/>
            <person name="Baeurle I."/>
            <person name="Li J."/>
            <person name="Cao X."/>
            <person name="He Z."/>
        </authorList>
    </citation>
    <scope>FUNCTION</scope>
    <scope>DISRUPTION PHENOTYPE</scope>
    <scope>INDUCTION BY HEAT</scope>
    <source>
        <strain>cv. Columbia</strain>
    </source>
</reference>
<reference key="15">
    <citation type="journal article" date="2019" name="Elife">
        <title>Epigenetic silencing of a multifunctional plant stress regulator.</title>
        <authorList>
            <person name="Zander M."/>
            <person name="Willige B.C."/>
            <person name="He Y."/>
            <person name="Nguyen T.A."/>
            <person name="Langford A.E."/>
            <person name="Nehring R."/>
            <person name="Howell E."/>
            <person name="McGrath R."/>
            <person name="Bartlett A."/>
            <person name="Castanon R."/>
            <person name="Nery J.R."/>
            <person name="Chen H."/>
            <person name="Zhang Z."/>
            <person name="Jupe F."/>
            <person name="Stepanova A."/>
            <person name="Schmitz R.J."/>
            <person name="Lewsey M.G."/>
            <person name="Chory J."/>
            <person name="Ecker J.R."/>
        </authorList>
    </citation>
    <scope>FUNCTION</scope>
    <scope>DISRUPTION PHENOTYPE</scope>
    <scope>INTERACTION WITH INO80</scope>
    <source>
        <strain>cv. Columbia</strain>
        <strain>cv. Landsberg erecta</strain>
    </source>
</reference>
<reference key="16">
    <citation type="journal article" date="2019" name="J. Integr. Plant Biol.">
        <title>REF6 promotes lateral root formation through de-repression of PIN1/3/7 genes.</title>
        <authorList>
            <person name="Wang X."/>
            <person name="Gao J."/>
            <person name="Gao S."/>
            <person name="Li Z."/>
            <person name="Kuai B."/>
            <person name="Ren G."/>
        </authorList>
    </citation>
    <scope>FUNCTION</scope>
    <scope>DISRUPTION PHENOTYPE</scope>
    <scope>TISSUE SPECIFICITY</scope>
    <scope>DEVELOPMENTAL STAGE</scope>
    <source>
        <strain>cv. Columbia</strain>
    </source>
</reference>
<reference key="17">
    <citation type="journal article" date="2020" name="Elife">
        <title>A new role for histone demethylases in the maintenance of plant genome integrity.</title>
        <authorList>
            <person name="Antunez-Sanchez J."/>
            <person name="Naish M."/>
            <person name="Ramirez-Prado J.S."/>
            <person name="Ohno S."/>
            <person name="Huang Y."/>
            <person name="Dawson A."/>
            <person name="Opassathian K."/>
            <person name="Manza-Mianza D."/>
            <person name="Ariel F."/>
            <person name="Raynaud C."/>
            <person name="Wibowo A."/>
            <person name="Daron J."/>
            <person name="Ueda M."/>
            <person name="Latrasse D."/>
            <person name="Slotkin R.K."/>
            <person name="Weigel D."/>
            <person name="Benhamed M."/>
            <person name="Gutierrez-Marcos J."/>
        </authorList>
    </citation>
    <scope>FUNCTION</scope>
    <scope>DISRUPTION PHENOTYPE</scope>
    <scope>CATALYTIC ACTIVITY</scope>
    <source>
        <strain>cv. Columbia</strain>
    </source>
</reference>
<reference key="18">
    <citation type="journal article" date="2020" name="J. Exp. Bot.">
        <title>Dehydroabietinal promotes flowering time and plant defense in Arabidopsis via the autonomous pathway genes FLOWERING LOCUS D, FVE, and RELATIVE OF EARLY FLOWERING 6.</title>
        <authorList>
            <person name="Chowdhury Z."/>
            <person name="Mohanty D."/>
            <person name="Giri M.K."/>
            <person name="Venables B.J."/>
            <person name="Chaturvedi R."/>
            <person name="Chao A."/>
            <person name="Petros R.A."/>
            <person name="Shah J."/>
        </authorList>
    </citation>
    <scope>FUNCTION</scope>
    <scope>DISRUPTION PHENOTYPE</scope>
    <scope>INDUCTION BY DEHYDROABIETINAL</scope>
    <source>
        <strain>cv. Columbia</strain>
        <strain>cv. Landsberg erecta</strain>
        <strain>cv. No-0</strain>
        <strain>cv. Wassilewskija</strain>
    </source>
</reference>
<reference key="19">
    <citation type="journal article" date="2020" name="Plant Physiol.">
        <title>The H3K27me3 demethylase RELATIVE OF EARLY FLOWERING6 suppresses seed dormancy by inducing abscisic acid catabolism.</title>
        <authorList>
            <person name="Chen H."/>
            <person name="Tong J."/>
            <person name="Fu W."/>
            <person name="Liang Z."/>
            <person name="Ruan J."/>
            <person name="Yu Y."/>
            <person name="Song X."/>
            <person name="Yuan L."/>
            <person name="Xiao L."/>
            <person name="Liu J."/>
            <person name="Cui Y."/>
            <person name="Huang S."/>
            <person name="Li C."/>
        </authorList>
    </citation>
    <scope>FUNCTION</scope>
    <scope>DISRUPTION PHENOTYPE</scope>
    <scope>TISSUE SPECIFICITY</scope>
    <scope>DEVELOPMENTAL STAGE</scope>
    <source>
        <strain>cv. Columbia</strain>
    </source>
</reference>
<reference key="20">
    <citation type="journal article" date="2019" name="Nat. Commun.">
        <title>DNA methylation repels targeting of Arabidopsis REF6.</title>
        <authorList>
            <person name="Qiu Q."/>
            <person name="Mei H."/>
            <person name="Deng X."/>
            <person name="He K."/>
            <person name="Wu B."/>
            <person name="Yao Q."/>
            <person name="Zhang J."/>
            <person name="Lu F."/>
            <person name="Ma J."/>
            <person name="Cao X."/>
        </authorList>
    </citation>
    <scope>X-RAY CRYSTALLOGRAPHY (2.05 ANGSTROMS) OF 1260-1360 IN COMPLEX WITH ZINC AND DNA</scope>
    <source>
        <strain>cv. Columbia</strain>
    </source>
</reference>
<reference key="21">
    <citation type="journal article" date="2020" name="Cell Discov.">
        <title>Crystal structures of REF6 and its complex with DNA reveal diverse recognition mechanisms.</title>
        <authorList>
            <person name="Tian Z."/>
            <person name="Li X."/>
            <person name="Li M."/>
            <person name="Wu W."/>
            <person name="Zhang M."/>
            <person name="Tang C."/>
            <person name="Li Z."/>
            <person name="Liu Y."/>
            <person name="Chen Z."/>
            <person name="Yang M."/>
            <person name="Ma L."/>
            <person name="Caba C."/>
            <person name="Tong Y."/>
            <person name="Lam H.-M."/>
            <person name="Dai S."/>
            <person name="Chen Z."/>
        </authorList>
    </citation>
    <scope>X-RAY CRYSTALLOGRAPHY (1.57 ANGSTROMS) OF 1223-1360 IN COMPLEX WITH ZINC AND DNA</scope>
    <scope>FUNCTION</scope>
    <scope>MUTAGENESIS OF LYS-1281; TYR-1282; TRP-1309; TRP-1311; GLU-1315; PHE-1339; VAL-1340; SER-1341 AND ASP-1342</scope>
    <scope>DOMAIN</scope>
    <scope>SUBUNIT</scope>
</reference>
<keyword id="KW-0002">3D-structure</keyword>
<keyword id="KW-0938">Abscisic acid signaling pathway</keyword>
<keyword id="KW-0007">Acetylation</keyword>
<keyword id="KW-0010">Activator</keyword>
<keyword id="KW-0156">Chromatin regulator</keyword>
<keyword id="KW-0223">Dioxygenase</keyword>
<keyword id="KW-0238">DNA-binding</keyword>
<keyword id="KW-0936">Ethylene signaling pathway</keyword>
<keyword id="KW-0309">Germination</keyword>
<keyword id="KW-0408">Iron</keyword>
<keyword id="KW-0479">Metal-binding</keyword>
<keyword id="KW-0539">Nucleus</keyword>
<keyword id="KW-0560">Oxidoreductase</keyword>
<keyword id="KW-0611">Plant defense</keyword>
<keyword id="KW-1185">Reference proteome</keyword>
<keyword id="KW-0677">Repeat</keyword>
<keyword id="KW-0346">Stress response</keyword>
<keyword id="KW-0804">Transcription</keyword>
<keyword id="KW-0805">Transcription regulation</keyword>
<keyword id="KW-0862">Zinc</keyword>
<keyword id="KW-0863">Zinc-finger</keyword>
<dbReference type="EC" id="1.14.11.-" evidence="21"/>
<dbReference type="EMBL" id="AY664499">
    <property type="protein sequence ID" value="AAT77779.1"/>
    <property type="molecule type" value="mRNA"/>
</dbReference>
<dbReference type="EMBL" id="AL049659">
    <property type="protein sequence ID" value="CAB41155.1"/>
    <property type="molecule type" value="Genomic_DNA"/>
</dbReference>
<dbReference type="EMBL" id="CP002686">
    <property type="protein sequence ID" value="AEE78416.1"/>
    <property type="molecule type" value="Genomic_DNA"/>
</dbReference>
<dbReference type="PIR" id="T06699">
    <property type="entry name" value="T06699"/>
</dbReference>
<dbReference type="RefSeq" id="NP_680116.2">
    <property type="nucleotide sequence ID" value="NM_148863.4"/>
</dbReference>
<dbReference type="PDB" id="6A57">
    <property type="method" value="X-ray"/>
    <property type="resolution" value="2.70 A"/>
    <property type="chains" value="A=1223-1360"/>
</dbReference>
<dbReference type="PDB" id="6A58">
    <property type="method" value="X-ray"/>
    <property type="resolution" value="1.57 A"/>
    <property type="chains" value="A=1223-1360"/>
</dbReference>
<dbReference type="PDB" id="6A59">
    <property type="method" value="X-ray"/>
    <property type="resolution" value="1.82 A"/>
    <property type="chains" value="A=1223-1360"/>
</dbReference>
<dbReference type="PDB" id="6JNL">
    <property type="method" value="X-ray"/>
    <property type="resolution" value="2.15 A"/>
    <property type="chains" value="A=1260-1360"/>
</dbReference>
<dbReference type="PDB" id="6JNM">
    <property type="method" value="X-ray"/>
    <property type="resolution" value="2.05 A"/>
    <property type="chains" value="A/B=1260-1360"/>
</dbReference>
<dbReference type="PDB" id="6JNN">
    <property type="method" value="X-ray"/>
    <property type="resolution" value="2.60 A"/>
    <property type="chains" value="A/B/G/N=1260-1360"/>
</dbReference>
<dbReference type="PDBsum" id="6A57"/>
<dbReference type="PDBsum" id="6A58"/>
<dbReference type="PDBsum" id="6A59"/>
<dbReference type="PDBsum" id="6JNL"/>
<dbReference type="PDBsum" id="6JNM"/>
<dbReference type="PDBsum" id="6JNN"/>
<dbReference type="SMR" id="Q9STM3"/>
<dbReference type="BioGRID" id="9321">
    <property type="interactions" value="4"/>
</dbReference>
<dbReference type="DIP" id="DIP-46006N"/>
<dbReference type="FunCoup" id="Q9STM3">
    <property type="interactions" value="2544"/>
</dbReference>
<dbReference type="IntAct" id="Q9STM3">
    <property type="interactions" value="1"/>
</dbReference>
<dbReference type="STRING" id="3702.Q9STM3"/>
<dbReference type="iPTMnet" id="Q9STM3"/>
<dbReference type="PaxDb" id="3702-AT3G48430.1"/>
<dbReference type="ProteomicsDB" id="236965"/>
<dbReference type="EnsemblPlants" id="AT3G48430.1">
    <property type="protein sequence ID" value="AT3G48430.1"/>
    <property type="gene ID" value="AT3G48430"/>
</dbReference>
<dbReference type="GeneID" id="824002"/>
<dbReference type="Gramene" id="AT3G48430.1">
    <property type="protein sequence ID" value="AT3G48430.1"/>
    <property type="gene ID" value="AT3G48430"/>
</dbReference>
<dbReference type="KEGG" id="ath:AT3G48430"/>
<dbReference type="Araport" id="AT3G48430"/>
<dbReference type="TAIR" id="AT3G48430">
    <property type="gene designation" value="REF6"/>
</dbReference>
<dbReference type="eggNOG" id="KOG1246">
    <property type="taxonomic scope" value="Eukaryota"/>
</dbReference>
<dbReference type="eggNOG" id="KOG1721">
    <property type="taxonomic scope" value="Eukaryota"/>
</dbReference>
<dbReference type="HOGENOM" id="CLU_001687_1_0_1"/>
<dbReference type="InParanoid" id="Q9STM3"/>
<dbReference type="OMA" id="MRFREPS"/>
<dbReference type="PhylomeDB" id="Q9STM3"/>
<dbReference type="PRO" id="PR:Q9STM3"/>
<dbReference type="Proteomes" id="UP000006548">
    <property type="component" value="Chromosome 3"/>
</dbReference>
<dbReference type="ExpressionAtlas" id="Q9STM3">
    <property type="expression patterns" value="baseline and differential"/>
</dbReference>
<dbReference type="GO" id="GO:0031011">
    <property type="term" value="C:Ino80 complex"/>
    <property type="evidence" value="ECO:0000304"/>
    <property type="project" value="UniProtKB"/>
</dbReference>
<dbReference type="GO" id="GO:0005634">
    <property type="term" value="C:nucleus"/>
    <property type="evidence" value="ECO:0000314"/>
    <property type="project" value="TAIR"/>
</dbReference>
<dbReference type="GO" id="GO:0071558">
    <property type="term" value="F:histone H3K27me2/H3K27me3 demethylase activity"/>
    <property type="evidence" value="ECO:0000314"/>
    <property type="project" value="UniProtKB"/>
</dbReference>
<dbReference type="GO" id="GO:0042803">
    <property type="term" value="F:protein homodimerization activity"/>
    <property type="evidence" value="ECO:0000314"/>
    <property type="project" value="UniProtKB"/>
</dbReference>
<dbReference type="GO" id="GO:0043565">
    <property type="term" value="F:sequence-specific DNA binding"/>
    <property type="evidence" value="ECO:0000314"/>
    <property type="project" value="UniProtKB"/>
</dbReference>
<dbReference type="GO" id="GO:0008270">
    <property type="term" value="F:zinc ion binding"/>
    <property type="evidence" value="ECO:0007669"/>
    <property type="project" value="UniProtKB-KW"/>
</dbReference>
<dbReference type="GO" id="GO:0046345">
    <property type="term" value="P:abscisic acid catabolic process"/>
    <property type="evidence" value="ECO:0000315"/>
    <property type="project" value="UniProtKB"/>
</dbReference>
<dbReference type="GO" id="GO:0009738">
    <property type="term" value="P:abscisic acid-activated signaling pathway"/>
    <property type="evidence" value="ECO:0007669"/>
    <property type="project" value="UniProtKB-KW"/>
</dbReference>
<dbReference type="GO" id="GO:0040029">
    <property type="term" value="P:epigenetic regulation of gene expression"/>
    <property type="evidence" value="ECO:0000314"/>
    <property type="project" value="UniProtKB"/>
</dbReference>
<dbReference type="GO" id="GO:0009873">
    <property type="term" value="P:ethylene-activated signaling pathway"/>
    <property type="evidence" value="ECO:0000315"/>
    <property type="project" value="TAIR"/>
</dbReference>
<dbReference type="GO" id="GO:0010286">
    <property type="term" value="P:heat acclimation"/>
    <property type="evidence" value="ECO:0000270"/>
    <property type="project" value="UniProtKB"/>
</dbReference>
<dbReference type="GO" id="GO:0048366">
    <property type="term" value="P:leaf development"/>
    <property type="evidence" value="ECO:0000315"/>
    <property type="project" value="TAIR"/>
</dbReference>
<dbReference type="GO" id="GO:0010628">
    <property type="term" value="P:positive regulation of gene expression"/>
    <property type="evidence" value="ECO:0000315"/>
    <property type="project" value="UniProtKB"/>
</dbReference>
<dbReference type="GO" id="GO:1901333">
    <property type="term" value="P:positive regulation of lateral root development"/>
    <property type="evidence" value="ECO:0000315"/>
    <property type="project" value="UniProtKB"/>
</dbReference>
<dbReference type="GO" id="GO:0051260">
    <property type="term" value="P:protein homooligomerization"/>
    <property type="evidence" value="ECO:0000314"/>
    <property type="project" value="UniProtKB"/>
</dbReference>
<dbReference type="GO" id="GO:0097355">
    <property type="term" value="P:protein localization to heterochromatin"/>
    <property type="evidence" value="ECO:0000314"/>
    <property type="project" value="UniProtKB"/>
</dbReference>
<dbReference type="GO" id="GO:0006355">
    <property type="term" value="P:regulation of DNA-templated transcription"/>
    <property type="evidence" value="ECO:0000314"/>
    <property type="project" value="UniProtKB"/>
</dbReference>
<dbReference type="GO" id="GO:0010104">
    <property type="term" value="P:regulation of ethylene-activated signaling pathway"/>
    <property type="evidence" value="ECO:0000315"/>
    <property type="project" value="UniProtKB"/>
</dbReference>
<dbReference type="GO" id="GO:2000028">
    <property type="term" value="P:regulation of photoperiodism, flowering"/>
    <property type="evidence" value="ECO:0000315"/>
    <property type="project" value="UniProtKB"/>
</dbReference>
<dbReference type="GO" id="GO:0048838">
    <property type="term" value="P:release of seed from dormancy"/>
    <property type="evidence" value="ECO:0000315"/>
    <property type="project" value="UniProtKB"/>
</dbReference>
<dbReference type="GO" id="GO:0009737">
    <property type="term" value="P:response to abscisic acid"/>
    <property type="evidence" value="ECO:0000270"/>
    <property type="project" value="UniProtKB"/>
</dbReference>
<dbReference type="GO" id="GO:0009741">
    <property type="term" value="P:response to brassinosteroid"/>
    <property type="evidence" value="ECO:0000315"/>
    <property type="project" value="TAIR"/>
</dbReference>
<dbReference type="GO" id="GO:1904629">
    <property type="term" value="P:response to diterpene"/>
    <property type="evidence" value="ECO:0000315"/>
    <property type="project" value="UniProtKB"/>
</dbReference>
<dbReference type="GO" id="GO:0009408">
    <property type="term" value="P:response to heat"/>
    <property type="evidence" value="ECO:0000315"/>
    <property type="project" value="UniProtKB"/>
</dbReference>
<dbReference type="GO" id="GO:0009612">
    <property type="term" value="P:response to mechanical stimulus"/>
    <property type="evidence" value="ECO:0000270"/>
    <property type="project" value="TAIR"/>
</dbReference>
<dbReference type="GO" id="GO:0010182">
    <property type="term" value="P:sugar mediated signaling pathway"/>
    <property type="evidence" value="ECO:0000304"/>
    <property type="project" value="TAIR"/>
</dbReference>
<dbReference type="GO" id="GO:0009627">
    <property type="term" value="P:systemic acquired resistance"/>
    <property type="evidence" value="ECO:0000315"/>
    <property type="project" value="UniProtKB"/>
</dbReference>
<dbReference type="GO" id="GO:0009826">
    <property type="term" value="P:unidimensional cell growth"/>
    <property type="evidence" value="ECO:0000315"/>
    <property type="project" value="TAIR"/>
</dbReference>
<dbReference type="GO" id="GO:0010228">
    <property type="term" value="P:vegetative to reproductive phase transition of meristem"/>
    <property type="evidence" value="ECO:0000315"/>
    <property type="project" value="TAIR"/>
</dbReference>
<dbReference type="FunFam" id="2.60.120.650:FF:000023">
    <property type="entry name" value="Probable lysine-specific demethylase ELF6"/>
    <property type="match status" value="1"/>
</dbReference>
<dbReference type="FunFam" id="3.30.160.60:FF:000747">
    <property type="entry name" value="Probable lysine-specific demethylase ELF6"/>
    <property type="match status" value="1"/>
</dbReference>
<dbReference type="FunFam" id="3.30.160.60:FF:000763">
    <property type="entry name" value="Probable lysine-specific demethylase ELF6"/>
    <property type="match status" value="1"/>
</dbReference>
<dbReference type="Gene3D" id="3.30.160.60">
    <property type="entry name" value="Classic Zinc Finger"/>
    <property type="match status" value="3"/>
</dbReference>
<dbReference type="Gene3D" id="2.60.120.650">
    <property type="entry name" value="Cupin"/>
    <property type="match status" value="1"/>
</dbReference>
<dbReference type="InterPro" id="IPR003347">
    <property type="entry name" value="JmjC_dom"/>
</dbReference>
<dbReference type="InterPro" id="IPR003349">
    <property type="entry name" value="JmjN"/>
</dbReference>
<dbReference type="InterPro" id="IPR036236">
    <property type="entry name" value="Znf_C2H2_sf"/>
</dbReference>
<dbReference type="InterPro" id="IPR013087">
    <property type="entry name" value="Znf_C2H2_type"/>
</dbReference>
<dbReference type="PANTHER" id="PTHR10694">
    <property type="entry name" value="LYSINE-SPECIFIC DEMETHYLASE"/>
    <property type="match status" value="1"/>
</dbReference>
<dbReference type="PANTHER" id="PTHR10694:SF38">
    <property type="entry name" value="LYSINE-SPECIFIC DEMETHYLASE REF6"/>
    <property type="match status" value="1"/>
</dbReference>
<dbReference type="Pfam" id="PF02373">
    <property type="entry name" value="JmjC"/>
    <property type="match status" value="1"/>
</dbReference>
<dbReference type="Pfam" id="PF02375">
    <property type="entry name" value="JmjN"/>
    <property type="match status" value="1"/>
</dbReference>
<dbReference type="SMART" id="SM00558">
    <property type="entry name" value="JmjC"/>
    <property type="match status" value="1"/>
</dbReference>
<dbReference type="SMART" id="SM00545">
    <property type="entry name" value="JmjN"/>
    <property type="match status" value="1"/>
</dbReference>
<dbReference type="SMART" id="SM00355">
    <property type="entry name" value="ZnF_C2H2"/>
    <property type="match status" value="4"/>
</dbReference>
<dbReference type="SUPFAM" id="SSF57667">
    <property type="entry name" value="beta-beta-alpha zinc fingers"/>
    <property type="match status" value="2"/>
</dbReference>
<dbReference type="SUPFAM" id="SSF51197">
    <property type="entry name" value="Clavaminate synthase-like"/>
    <property type="match status" value="1"/>
</dbReference>
<dbReference type="PROSITE" id="PS51184">
    <property type="entry name" value="JMJC"/>
    <property type="match status" value="1"/>
</dbReference>
<dbReference type="PROSITE" id="PS51183">
    <property type="entry name" value="JMJN"/>
    <property type="match status" value="1"/>
</dbReference>
<dbReference type="PROSITE" id="PS00028">
    <property type="entry name" value="ZINC_FINGER_C2H2_1"/>
    <property type="match status" value="3"/>
</dbReference>
<dbReference type="PROSITE" id="PS50157">
    <property type="entry name" value="ZINC_FINGER_C2H2_2"/>
    <property type="match status" value="3"/>
</dbReference>
<evidence type="ECO:0000255" key="1">
    <source>
        <dbReference type="PROSITE-ProRule" id="PRU00042"/>
    </source>
</evidence>
<evidence type="ECO:0000255" key="2">
    <source>
        <dbReference type="PROSITE-ProRule" id="PRU00537"/>
    </source>
</evidence>
<evidence type="ECO:0000255" key="3">
    <source>
        <dbReference type="PROSITE-ProRule" id="PRU00538"/>
    </source>
</evidence>
<evidence type="ECO:0000255" key="4">
    <source>
        <dbReference type="PROSITE-ProRule" id="PRU00768"/>
    </source>
</evidence>
<evidence type="ECO:0000256" key="5">
    <source>
        <dbReference type="SAM" id="MobiDB-lite"/>
    </source>
</evidence>
<evidence type="ECO:0000269" key="6">
    <source>
    </source>
</evidence>
<evidence type="ECO:0000269" key="7">
    <source>
    </source>
</evidence>
<evidence type="ECO:0000269" key="8">
    <source>
    </source>
</evidence>
<evidence type="ECO:0000269" key="9">
    <source>
    </source>
</evidence>
<evidence type="ECO:0000269" key="10">
    <source>
    </source>
</evidence>
<evidence type="ECO:0000269" key="11">
    <source>
    </source>
</evidence>
<evidence type="ECO:0000269" key="12">
    <source>
    </source>
</evidence>
<evidence type="ECO:0000269" key="13">
    <source>
    </source>
</evidence>
<evidence type="ECO:0000269" key="14">
    <source>
    </source>
</evidence>
<evidence type="ECO:0000269" key="15">
    <source>
    </source>
</evidence>
<evidence type="ECO:0000269" key="16">
    <source>
    </source>
</evidence>
<evidence type="ECO:0000269" key="17">
    <source>
    </source>
</evidence>
<evidence type="ECO:0000269" key="18">
    <source>
    </source>
</evidence>
<evidence type="ECO:0000269" key="19">
    <source>
    </source>
</evidence>
<evidence type="ECO:0000269" key="20">
    <source>
    </source>
</evidence>
<evidence type="ECO:0000269" key="21">
    <source>
    </source>
</evidence>
<evidence type="ECO:0000303" key="22">
    <source>
    </source>
</evidence>
<evidence type="ECO:0000303" key="23">
    <source>
    </source>
</evidence>
<evidence type="ECO:0000303" key="24">
    <source>
    </source>
</evidence>
<evidence type="ECO:0000303" key="25">
    <source>
    </source>
</evidence>
<evidence type="ECO:0000305" key="26"/>
<evidence type="ECO:0000305" key="27">
    <source>
    </source>
</evidence>
<evidence type="ECO:0000312" key="28">
    <source>
        <dbReference type="Araport" id="AT3G48430"/>
    </source>
</evidence>
<evidence type="ECO:0000312" key="29">
    <source>
        <dbReference type="EMBL" id="CAB41155.1"/>
    </source>
</evidence>
<evidence type="ECO:0007744" key="30">
    <source>
        <dbReference type="PDB" id="6A57"/>
    </source>
</evidence>
<evidence type="ECO:0007744" key="31">
    <source>
        <dbReference type="PDB" id="6A58"/>
    </source>
</evidence>
<evidence type="ECO:0007744" key="32">
    <source>
        <dbReference type="PDB" id="6A59"/>
    </source>
</evidence>
<evidence type="ECO:0007744" key="33">
    <source>
        <dbReference type="PDB" id="6JNL"/>
    </source>
</evidence>
<evidence type="ECO:0007744" key="34">
    <source>
        <dbReference type="PDB" id="6JNM"/>
    </source>
</evidence>
<evidence type="ECO:0007744" key="35">
    <source>
        <dbReference type="PDB" id="6JNN"/>
    </source>
</evidence>
<evidence type="ECO:0007744" key="36">
    <source>
    </source>
</evidence>
<evidence type="ECO:0007829" key="37">
    <source>
        <dbReference type="PDB" id="6A57"/>
    </source>
</evidence>
<evidence type="ECO:0007829" key="38">
    <source>
        <dbReference type="PDB" id="6A58"/>
    </source>
</evidence>
<evidence type="ECO:0007829" key="39">
    <source>
        <dbReference type="PDB" id="6JNL"/>
    </source>
</evidence>
<comment type="function">
    <text evidence="6 7 9 10 11 12 13 14 15 16 17 18 19 20 21">Histone demethylase that demethylates 'Lys-27' (H3K27me) of histone H3, thus acting as a positive regulator of gene expression (PubMed:33107825). Demethylates both tri- (H3K27me3) and di-methylated (H3K27me2) H3K27me (PubMed:21642989, PubMed:27111035, PubMed:33107825). Also demethylates H3K4me3/2 and H3K36me3/2 in an in vitro assay (PubMed:20711170). Involved in the transcriptional regulation of hundreds of genes regulating developmental patterning and responses to various stimuli (PubMed:18467490). Binds DNA via its four zinc fingers in a sequence-specific manner, 5'-CTCTG(C/T)T(C/T)-3' (5'-CTCTGYTY-3'), with a preference for hypo-methylated status (e.g. cytosine methylation), to promote the demethylation of H3K27me3 and recruit the chromatin remodeler BRM in order to activate gene expression (PubMed:27111034, PubMed:27111035, PubMed:31048693, PubMed:32257379). Participates in the regulation of organ boundary formation (PubMed:27111034, PubMed:27111035, PubMed:31048693, PubMed:32257379). Bind mostly motifs located in active chromatin states which are depleted for heterochromatic modifications (PubMed:31048693). Involved in the regulation of flowering time by repressing FLOWERING LOCUS C (FLC) expression (PubMed:15377760, PubMed:32392578, PubMed:33107825). Stimulates lateral roots formation (e.g. primordium initiation and emergence) via the epigenetic de-repression of PIN genes such as PIN1, PIN3 and PIN7 directly by modulating the methylation status of their loci (PubMed:30267471). Interacts with the NF-Y complex to regulate SOC1 (PubMed:25105952). Mediates the recruitment of BRM to its target loci (PubMed:27111034). Together with EEN, involved in the epigenetic chromatin-dependent regulatory mechanism that monitors the expression of the essential multifunctional plant stress regulator EIN2 via H3K27me3 repressive histone demethylation and histone variant H2A.Z eviction, thus modulating responses to ethylene (ET), especially during embryogenesis (PubMed:31418686). Eluviates seed dormancy by triggering abscisic acid (ABA) catabolism in seeds via the induction of CYP707A1 and CYP707A3 expression, genes involved in ABA degradation; binds directly to CYP707A1 and CYP707A3 loci to reduce their H3K27me3 levels in developing siliques (PubMed:33037128). Required for systemic acquired resistance (SAR) toward pathogenic bacteria (e.g. Pseudomonas syringae pv tomato DC3000 (avrPto)) (PubMed:32392578). Together with FLD and MSI4/FVE, contributes to dehydroabietinal-dependent (DA, a diterpenoid tricyclic diterpene) activation of flowering ans SAR (PubMed:32392578). Binds to the HSFA2 chromatin region to alleviate H3K27me3 repressive marks and trigger its expression in response to heat in a BRM-dependent manner (PubMed:30778176). Involved in the mechanisms necessary for quick response to heat and subsequent heritable transgenerational memory of heat acclimation (global warming) such as early flowering and attenuated immunity; this process includes epigenetic regulation as well as post-transcriptional gene silencing (PTGS) (PubMed:30778176). In response to heat, HSFA2 is activated and promotes the expression of REF6 which in turn derepresses HSFA2, thus establishing a heritable feedback loop able to trigger SGIP1 and subsequent SGIP1-mediated SGS3 degradation; this prevents the biosynthesis of trans-acting siRNA (tasiRNA) and leads to the release of HTT5, which drives early flowering but attenuates immunity (PubMed:30778176).</text>
</comment>
<comment type="function">
    <text evidence="21">Involved in the maintenance of H3K27me1 histone marks on euchromatin in a PRC2-dependent manner, to maintain low-level basal expression of corresponding genes (PubMed:33107825). Together with ELF6, required for H3K27me3 resetting (especially in constitutive heterochromatin within the pericentromeric regions) and transgenerational inheritance of histone marks, thus acting in safeguarding genome and epigenome integrity during sexual reproduction (PubMed:33107825).</text>
</comment>
<comment type="catalytic activity">
    <reaction evidence="21">
        <text>N(6),N(6),N(6)-trimethyl-L-lysyl(27)-[histone H3] + 2-oxoglutarate + O2 = N(6),N(6)-dimethyl-L-lysyl(27)-[histone H3] + formaldehyde + succinate + CO2</text>
        <dbReference type="Rhea" id="RHEA:60228"/>
        <dbReference type="Rhea" id="RHEA-COMP:15535"/>
        <dbReference type="Rhea" id="RHEA-COMP:15539"/>
        <dbReference type="ChEBI" id="CHEBI:15379"/>
        <dbReference type="ChEBI" id="CHEBI:16526"/>
        <dbReference type="ChEBI" id="CHEBI:16810"/>
        <dbReference type="ChEBI" id="CHEBI:16842"/>
        <dbReference type="ChEBI" id="CHEBI:30031"/>
        <dbReference type="ChEBI" id="CHEBI:61961"/>
        <dbReference type="ChEBI" id="CHEBI:61976"/>
    </reaction>
    <physiologicalReaction direction="left-to-right" evidence="21">
        <dbReference type="Rhea" id="RHEA:60229"/>
    </physiologicalReaction>
</comment>
<comment type="catalytic activity">
    <reaction evidence="21">
        <text>N(6),N(6)-dimethyl-L-lysyl(27)-[histone H3] + 2-oxoglutarate + O2 = N(6)-methyl-L-lysyl(27)-[histone H3] + formaldehyde + succinate + CO2</text>
        <dbReference type="Rhea" id="RHEA:60232"/>
        <dbReference type="Rhea" id="RHEA-COMP:15539"/>
        <dbReference type="Rhea" id="RHEA-COMP:15544"/>
        <dbReference type="ChEBI" id="CHEBI:15379"/>
        <dbReference type="ChEBI" id="CHEBI:16526"/>
        <dbReference type="ChEBI" id="CHEBI:16810"/>
        <dbReference type="ChEBI" id="CHEBI:16842"/>
        <dbReference type="ChEBI" id="CHEBI:30031"/>
        <dbReference type="ChEBI" id="CHEBI:61929"/>
        <dbReference type="ChEBI" id="CHEBI:61976"/>
    </reaction>
    <physiologicalReaction direction="left-to-right" evidence="21">
        <dbReference type="Rhea" id="RHEA:60233"/>
    </physiologicalReaction>
</comment>
<comment type="subunit">
    <text evidence="7 11 12 18 25">Forms homooligomers (PubMed:32257379). Interacts with BZR2 (via N-terminus) (PubMed:18467490). Interacts with BRM in the SWI/SNF complex (PubMed:27111034). Interacts (via N-terminus) with NFYC9 (PubMed:25105952). Associates with INO80 (PubMed:31418686).</text>
</comment>
<comment type="interaction">
    <interactant intactId="EBI-1798387">
        <id>Q9STM3</id>
    </interactant>
    <interactant intactId="EBI-617078">
        <id>Q9LN63</id>
        <label>BZR2</label>
    </interactant>
    <organismsDiffer>false</organismsDiffer>
    <experiments>2</experiments>
</comment>
<comment type="subcellular location">
    <subcellularLocation>
        <location evidence="2 4 6 12">Nucleus</location>
    </subcellularLocation>
</comment>
<comment type="tissue specificity">
    <text evidence="6 8 14 20">Highly expressed in the shoot apical meristem and primary and secondary root tips, and lower expression in cotyledons, leaves and root axis along vascular tissues (PubMed:30267471). Detected in inflorescences, stems and siliques. Present in seeds (PubMed:33037128).</text>
</comment>
<comment type="developmental stage">
    <text evidence="14 20">Accumulates during seed development, seed storage, and seed germination stages (PubMed:33037128). In roots, highly expressed in the stele, but barely detectable in the cortex and epidermis (PubMed:30267471). Not observed in lateral root primordia, but detected in both young and mature lateral roots (PubMed:30267471).</text>
</comment>
<comment type="induction">
    <text evidence="15 19 20">Induced by abscisic acid (ABA) during seed germination (PubMed:33037128). Induced by dehydroabietinal-dependent (DA), a diterpenoid tricyclic diterpene that promotes flowering and systemic acquired resistance (SAR) (PubMed:32392578). Up-regulated by heat stress (at 30 degrees Celsius) and remains up-regulated transgenerationally in the unstressed progeny (at 22 degrees Celsius), partly via a heritable feedback loop involving HSFA2 (PubMed:30778176).</text>
</comment>
<comment type="domain">
    <text evidence="13 18">The 4 C2H2-type zinc fingers are required for DNA-binding, but dispensable for the H3K27me3/2 demethylase activity.</text>
</comment>
<comment type="disruption phenotype">
    <text evidence="6 7 14 15 17 19 20 21">Late-flowering in both long and short days with an increased number of rosette leaves at bolting stage (PubMed:15377760, PubMed:32392578, PubMed:33107825). Brassinosteroid-insensitive phenotype (PubMed:18467490). Hyper-methylated genes with accumulation of H3K27me3 histone marks, but drastic reduction in H3K27me1 (PubMed:33107825). Enhanced dormancy associated with increased abscisic acid (ABA) levels as well as reduced expression of CYP707A1 and CYP707A3 (due to higher H3K27me3 content at their loci), genes involved in ABA catabolism, during seed development and germination (PubMed:33037128). Suppressed expression of PIN genes (e.g. PIN1, PIN3 and PIN7) due to increased levels of H3K27me3 at their loci and leading to altered lateral root formation and elongation (PubMed:30267471). Impaired systemic acquired resistance (SAR) toward pathogenic bacteria (e.g. Pseudomonas syringae pv tomato DC3000 (avrPto)) (PubMed:32392578). Lost ability of dehydroabietinal-dependent (DA, a diterpenoid tricyclic diterpene) to trigger flowering and systemic acquired resistance (SAR) (PubMed:32392578). Elevated H3K27me3 levels at HSFA2 locus associated with a reduced expression of HSFA2 and altered thermo-responsiveness and thermomemory of flowering (PubMed:30778176). Plants lacking both REF6 and ELF6 have several growth defects, such as increased number of petals, reduced silique length, embryos with patterning defects, and pleiotropic defects in leaf morphology, such as serrations and downward curling; these defects are caused by epimutations arising in offspring lineage due to a lack of H3K27me3 resetting during sexual reproduction (PubMed:33107825). Plants missing both EEN and REF6/EIN6 (e.g. ref6-1 een-2 and ein6-1 een-1), as well as double mutants ref6-1 ino80-1 and ref6-1 arp5-1, are insensitive to ethylene (ET) and exhibit reduced levels of EIN2 associated with a shift of the chromatin landscape to a repressive state at its locus (e.g. H3K27me3 and H2A.Z) (PubMed:31418686).</text>
</comment>
<comment type="similarity">
    <text evidence="26">Belongs to the JHDM3 histone demethylase family.</text>
</comment>
<comment type="caution">
    <text evidence="27">According to some authors, recombinant REF6 can demethylate H3K4me3/2 and H3K36me3/2 (PubMed:20711170). In contrast, PubMed:21642989 and PubMed:27111035 show that REF6 is an intrinsic H3K27me3/2-specific demethylase. The different activities seen may be caused by the presence of different cofactors.</text>
</comment>
<organism>
    <name type="scientific">Arabidopsis thaliana</name>
    <name type="common">Mouse-ear cress</name>
    <dbReference type="NCBI Taxonomy" id="3702"/>
    <lineage>
        <taxon>Eukaryota</taxon>
        <taxon>Viridiplantae</taxon>
        <taxon>Streptophyta</taxon>
        <taxon>Embryophyta</taxon>
        <taxon>Tracheophyta</taxon>
        <taxon>Spermatophyta</taxon>
        <taxon>Magnoliopsida</taxon>
        <taxon>eudicotyledons</taxon>
        <taxon>Gunneridae</taxon>
        <taxon>Pentapetalae</taxon>
        <taxon>rosids</taxon>
        <taxon>malvids</taxon>
        <taxon>Brassicales</taxon>
        <taxon>Brassicaceae</taxon>
        <taxon>Camelineae</taxon>
        <taxon>Arabidopsis</taxon>
    </lineage>
</organism>
<feature type="initiator methionine" description="Removed" evidence="36">
    <location>
        <position position="1"/>
    </location>
</feature>
<feature type="chain" id="PRO_0000412631" description="Lysine-specific demethylase REF6">
    <location>
        <begin position="2"/>
        <end position="1360"/>
    </location>
</feature>
<feature type="domain" description="JmjN" evidence="2">
    <location>
        <begin position="20"/>
        <end position="61"/>
    </location>
</feature>
<feature type="domain" description="JmjC" evidence="3">
    <location>
        <begin position="203"/>
        <end position="369"/>
    </location>
</feature>
<feature type="zinc finger region" description="C2H2-type 1; degenerate" evidence="1">
    <location>
        <begin position="1243"/>
        <end position="1266"/>
    </location>
</feature>
<feature type="zinc finger region" description="C2H2-type 2" evidence="1">
    <location>
        <begin position="1266"/>
        <end position="1290"/>
    </location>
</feature>
<feature type="zinc finger region" description="C2H2-type 3" evidence="1">
    <location>
        <begin position="1296"/>
        <end position="1320"/>
    </location>
</feature>
<feature type="zinc finger region" description="C2H2-type 4" evidence="1">
    <location>
        <begin position="1326"/>
        <end position="1352"/>
    </location>
</feature>
<feature type="region of interest" description="Disordered" evidence="5">
    <location>
        <begin position="652"/>
        <end position="698"/>
    </location>
</feature>
<feature type="region of interest" description="Disordered" evidence="5">
    <location>
        <begin position="955"/>
        <end position="1012"/>
    </location>
</feature>
<feature type="region of interest" description="Disordered" evidence="5">
    <location>
        <begin position="1044"/>
        <end position="1081"/>
    </location>
</feature>
<feature type="region of interest" description="Disordered" evidence="5">
    <location>
        <begin position="1133"/>
        <end position="1155"/>
    </location>
</feature>
<feature type="region of interest" description="Disordered" evidence="5">
    <location>
        <begin position="1172"/>
        <end position="1238"/>
    </location>
</feature>
<feature type="region of interest" description="DNA-binding" evidence="16 18 30 33 34 35">
    <location>
        <begin position="1275"/>
        <end position="1348"/>
    </location>
</feature>
<feature type="short sequence motif" description="Nuclear localization signal" evidence="4">
    <location>
        <begin position="944"/>
        <end position="951"/>
    </location>
</feature>
<feature type="compositionally biased region" description="Basic and acidic residues" evidence="5">
    <location>
        <begin position="673"/>
        <end position="694"/>
    </location>
</feature>
<feature type="compositionally biased region" description="Polar residues" evidence="5">
    <location>
        <begin position="994"/>
        <end position="1008"/>
    </location>
</feature>
<feature type="compositionally biased region" description="Polar residues" evidence="5">
    <location>
        <begin position="1046"/>
        <end position="1057"/>
    </location>
</feature>
<feature type="compositionally biased region" description="Basic residues" evidence="5">
    <location>
        <begin position="1136"/>
        <end position="1147"/>
    </location>
</feature>
<feature type="compositionally biased region" description="Acidic residues" evidence="5">
    <location>
        <begin position="1225"/>
        <end position="1238"/>
    </location>
</feature>
<feature type="binding site" evidence="3">
    <location>
        <position position="246"/>
    </location>
    <ligand>
        <name>Fe cation</name>
        <dbReference type="ChEBI" id="CHEBI:24875"/>
        <note>catalytic</note>
    </ligand>
</feature>
<feature type="binding site" evidence="3">
    <location>
        <position position="248"/>
    </location>
    <ligand>
        <name>Fe cation</name>
        <dbReference type="ChEBI" id="CHEBI:24875"/>
        <note>catalytic</note>
    </ligand>
</feature>
<feature type="binding site" evidence="3">
    <location>
        <position position="337"/>
    </location>
    <ligand>
        <name>Fe cation</name>
        <dbReference type="ChEBI" id="CHEBI:24875"/>
        <note>catalytic</note>
    </ligand>
</feature>
<feature type="binding site" evidence="18 30 31 32">
    <location>
        <position position="1245"/>
    </location>
    <ligand>
        <name>Zn(2+)</name>
        <dbReference type="ChEBI" id="CHEBI:29105"/>
        <label>1</label>
    </ligand>
</feature>
<feature type="binding site" evidence="18 30 31 32">
    <location>
        <position position="1250"/>
    </location>
    <ligand>
        <name>Zn(2+)</name>
        <dbReference type="ChEBI" id="CHEBI:29105"/>
        <label>1</label>
    </ligand>
</feature>
<feature type="binding site" evidence="18 30 31 32">
    <location>
        <position position="1263"/>
    </location>
    <ligand>
        <name>Zn(2+)</name>
        <dbReference type="ChEBI" id="CHEBI:29105"/>
        <label>1</label>
    </ligand>
</feature>
<feature type="binding site" evidence="16 18 30 31 32 33 35">
    <location>
        <position position="1268"/>
    </location>
    <ligand>
        <name>Zn(2+)</name>
        <dbReference type="ChEBI" id="CHEBI:29105"/>
        <label>2</label>
    </ligand>
</feature>
<feature type="binding site" evidence="16 18 30 31 32 33 35">
    <location>
        <position position="1273"/>
    </location>
    <ligand>
        <name>Zn(2+)</name>
        <dbReference type="ChEBI" id="CHEBI:29105"/>
        <label>2</label>
    </ligand>
</feature>
<feature type="binding site" evidence="18 30 31 32">
    <location>
        <position position="1280"/>
    </location>
    <ligand>
        <name>Zn(2+)</name>
        <dbReference type="ChEBI" id="CHEBI:29105"/>
        <label>1</label>
    </ligand>
</feature>
<feature type="binding site" evidence="16 18 30 31 32 33 35">
    <location>
        <position position="1286"/>
    </location>
    <ligand>
        <name>Zn(2+)</name>
        <dbReference type="ChEBI" id="CHEBI:29105"/>
        <label>2</label>
    </ligand>
</feature>
<feature type="binding site" evidence="16 18 30 31 32 33 35">
    <location>
        <position position="1290"/>
    </location>
    <ligand>
        <name>Zn(2+)</name>
        <dbReference type="ChEBI" id="CHEBI:29105"/>
        <label>2</label>
    </ligand>
</feature>
<feature type="binding site" evidence="16 18 30 31 32 33 35">
    <location>
        <position position="1298"/>
    </location>
    <ligand>
        <name>Zn(2+)</name>
        <dbReference type="ChEBI" id="CHEBI:29105"/>
        <label>3</label>
    </ligand>
</feature>
<feature type="binding site" evidence="16 18 30 31 32 33 35">
    <location>
        <position position="1303"/>
    </location>
    <ligand>
        <name>Zn(2+)</name>
        <dbReference type="ChEBI" id="CHEBI:29105"/>
        <label>3</label>
    </ligand>
</feature>
<feature type="binding site" evidence="16 18 30 31 32 33 35">
    <location>
        <position position="1316"/>
    </location>
    <ligand>
        <name>Zn(2+)</name>
        <dbReference type="ChEBI" id="CHEBI:29105"/>
        <label>3</label>
    </ligand>
</feature>
<feature type="binding site" evidence="16 18 30 31 32 33 35">
    <location>
        <position position="1320"/>
    </location>
    <ligand>
        <name>Zn(2+)</name>
        <dbReference type="ChEBI" id="CHEBI:29105"/>
        <label>3</label>
    </ligand>
</feature>
<feature type="binding site" evidence="16 18 30 31 32 33 34 35">
    <location>
        <position position="1328"/>
    </location>
    <ligand>
        <name>Zn(2+)</name>
        <dbReference type="ChEBI" id="CHEBI:29105"/>
        <label>4</label>
    </ligand>
</feature>
<feature type="binding site" evidence="16 18 30 31 32 33 34 35">
    <location>
        <position position="1333"/>
    </location>
    <ligand>
        <name>Zn(2+)</name>
        <dbReference type="ChEBI" id="CHEBI:29105"/>
        <label>4</label>
    </ligand>
</feature>
<feature type="binding site" evidence="16 18 30 31 32 33 34 35">
    <location>
        <position position="1346"/>
    </location>
    <ligand>
        <name>Zn(2+)</name>
        <dbReference type="ChEBI" id="CHEBI:29105"/>
        <label>4</label>
    </ligand>
</feature>
<feature type="binding site" evidence="16 18 30 31 32 33 34 35">
    <location>
        <position position="1352"/>
    </location>
    <ligand>
        <name>Zn(2+)</name>
        <dbReference type="ChEBI" id="CHEBI:29105"/>
        <label>4</label>
    </ligand>
</feature>
<feature type="modified residue" description="N-acetylalanine" evidence="36">
    <location>
        <position position="2"/>
    </location>
</feature>
<feature type="mutagenesis site" description="Loss of demethylase activity." evidence="10">
    <original>H</original>
    <variation>A</variation>
    <location>
        <position position="246"/>
    </location>
</feature>
<feature type="mutagenesis site" description="Reduced binding affinity to DNA." evidence="18">
    <original>K</original>
    <variation>A</variation>
    <location>
        <position position="1281"/>
    </location>
</feature>
<feature type="mutagenesis site" description="Reduced binding affinity to DNA." evidence="18">
    <original>Y</original>
    <variation>A</variation>
    <location>
        <position position="1282"/>
    </location>
</feature>
<feature type="mutagenesis site" description="Impaired binding affinity to DNA." evidence="18">
    <original>W</original>
    <variation>A</variation>
    <location>
        <position position="1309"/>
    </location>
</feature>
<feature type="mutagenesis site" description="Reduced binding affinity to DNA." evidence="18">
    <original>W</original>
    <variation>A</variation>
    <location>
        <position position="1311"/>
    </location>
</feature>
<feature type="mutagenesis site" description="Reduced binding affinity to DNA." evidence="18">
    <original>E</original>
    <variation>A</variation>
    <location>
        <position position="1315"/>
    </location>
</feature>
<feature type="mutagenesis site" description="Reduced binding affinity to DNA." evidence="18">
    <original>F</original>
    <variation>A</variation>
    <location>
        <position position="1339"/>
    </location>
</feature>
<feature type="mutagenesis site" description="Reduced binding affinity to DNA." evidence="18">
    <original>V</original>
    <variation>A</variation>
    <location>
        <position position="1340"/>
    </location>
</feature>
<feature type="mutagenesis site" description="Reduced binding affinity to DNA." evidence="18">
    <original>S</original>
    <variation>W</variation>
    <location>
        <position position="1341"/>
    </location>
</feature>
<feature type="mutagenesis site" description="Reduced binding affinity to DNA." evidence="18">
    <original>D</original>
    <variation>A</variation>
    <location>
        <position position="1342"/>
    </location>
</feature>
<feature type="strand" evidence="37">
    <location>
        <begin position="1235"/>
        <end position="1238"/>
    </location>
</feature>
<feature type="turn" evidence="38">
    <location>
        <begin position="1239"/>
        <end position="1241"/>
    </location>
</feature>
<feature type="strand" evidence="38">
    <location>
        <begin position="1242"/>
        <end position="1244"/>
    </location>
</feature>
<feature type="turn" evidence="37">
    <location>
        <begin position="1247"/>
        <end position="1249"/>
    </location>
</feature>
<feature type="strand" evidence="38">
    <location>
        <begin position="1253"/>
        <end position="1256"/>
    </location>
</feature>
<feature type="helix" evidence="38">
    <location>
        <begin position="1257"/>
        <end position="1264"/>
    </location>
</feature>
<feature type="turn" evidence="38">
    <location>
        <begin position="1271"/>
        <end position="1273"/>
    </location>
</feature>
<feature type="strand" evidence="39">
    <location>
        <begin position="1276"/>
        <end position="1278"/>
    </location>
</feature>
<feature type="helix" evidence="38">
    <location>
        <begin position="1280"/>
        <end position="1290"/>
    </location>
</feature>
<feature type="strand" evidence="38">
    <location>
        <begin position="1306"/>
        <end position="1309"/>
    </location>
</feature>
<feature type="helix" evidence="38">
    <location>
        <begin position="1310"/>
        <end position="1321"/>
    </location>
</feature>
<feature type="turn" evidence="38">
    <location>
        <begin position="1331"/>
        <end position="1333"/>
    </location>
</feature>
<feature type="strand" evidence="38">
    <location>
        <begin position="1336"/>
        <end position="1339"/>
    </location>
</feature>
<feature type="helix" evidence="38">
    <location>
        <begin position="1340"/>
        <end position="1349"/>
    </location>
</feature>